<gene>
    <name type="ordered locus">Mal-024</name>
</gene>
<evidence type="ECO:0000250" key="1"/>
<evidence type="ECO:0000305" key="2"/>
<proteinExistence type="inferred from homology"/>
<comment type="function">
    <text evidence="1">Plays a role in virus cell tropism, and may be required for efficient virus replication in macrophages.</text>
</comment>
<comment type="similarity">
    <text evidence="2">Belongs to the asfivirus MGF 300 family.</text>
</comment>
<sequence length="160" mass="18201">MITLYEAAIKTLITHRKQILKHPDSREILLALGLYWDKTHILLKCQECGKISLTGKHSTKCININCLLILAIKKKNKRIVDTLIGMGADVKYIHFLNNKTKLSYNQLSMLKSNPQISLKEFHAICYILYGRLPKKIKQGMRLCKTLAGLCGELLCAFFAP</sequence>
<name>3002R_ASFM2</name>
<organism>
    <name type="scientific">African swine fever virus (isolate Tick/Malawi/Lil 20-1/1983)</name>
    <name type="common">ASFV</name>
    <dbReference type="NCBI Taxonomy" id="10500"/>
    <lineage>
        <taxon>Viruses</taxon>
        <taxon>Varidnaviria</taxon>
        <taxon>Bamfordvirae</taxon>
        <taxon>Nucleocytoviricota</taxon>
        <taxon>Pokkesviricetes</taxon>
        <taxon>Asfuvirales</taxon>
        <taxon>Asfarviridae</taxon>
        <taxon>Asfivirus</taxon>
        <taxon>African swine fever virus</taxon>
    </lineage>
</organism>
<reference key="1">
    <citation type="submission" date="2003-03" db="EMBL/GenBank/DDBJ databases">
        <title>African swine fever virus genomes.</title>
        <authorList>
            <person name="Kutish G.F."/>
            <person name="Rock D.L."/>
        </authorList>
    </citation>
    <scope>NUCLEOTIDE SEQUENCE [LARGE SCALE GENOMIC DNA]</scope>
</reference>
<accession>P0C9L0</accession>
<organismHost>
    <name type="scientific">Ornithodoros</name>
    <name type="common">relapsing fever ticks</name>
    <dbReference type="NCBI Taxonomy" id="6937"/>
</organismHost>
<organismHost>
    <name type="scientific">Phacochoerus aethiopicus</name>
    <name type="common">Warthog</name>
    <dbReference type="NCBI Taxonomy" id="85517"/>
</organismHost>
<organismHost>
    <name type="scientific">Phacochoerus africanus</name>
    <name type="common">Warthog</name>
    <dbReference type="NCBI Taxonomy" id="41426"/>
</organismHost>
<organismHost>
    <name type="scientific">Potamochoerus larvatus</name>
    <name type="common">Bushpig</name>
    <dbReference type="NCBI Taxonomy" id="273792"/>
</organismHost>
<organismHost>
    <name type="scientific">Sus scrofa</name>
    <name type="common">Pig</name>
    <dbReference type="NCBI Taxonomy" id="9823"/>
</organismHost>
<feature type="chain" id="PRO_0000373234" description="Protein MGF 300-2R">
    <location>
        <begin position="1"/>
        <end position="160"/>
    </location>
</feature>
<protein>
    <recommendedName>
        <fullName>Protein MGF 300-2R</fullName>
    </recommendedName>
</protein>
<dbReference type="EMBL" id="AY261361">
    <property type="status" value="NOT_ANNOTATED_CDS"/>
    <property type="molecule type" value="Genomic_DNA"/>
</dbReference>
<dbReference type="Proteomes" id="UP000000860">
    <property type="component" value="Segment"/>
</dbReference>